<dbReference type="EC" id="2.7.7.50" evidence="1"/>
<dbReference type="EC" id="2.1.1.56" evidence="1"/>
<dbReference type="EMBL" id="X96697">
    <property type="protein sequence ID" value="CAA65469.1"/>
    <property type="molecule type" value="mRNA"/>
</dbReference>
<dbReference type="RefSeq" id="YP_392516.1">
    <property type="nucleotide sequence ID" value="NC_007574.1"/>
</dbReference>
<dbReference type="SMR" id="Q82041"/>
<dbReference type="GeneID" id="3773133"/>
<dbReference type="KEGG" id="vg:3773133"/>
<dbReference type="Proteomes" id="UP000007664">
    <property type="component" value="Genome"/>
</dbReference>
<dbReference type="GO" id="GO:0019013">
    <property type="term" value="C:viral nucleocapsid"/>
    <property type="evidence" value="ECO:0007669"/>
    <property type="project" value="UniProtKB-UniRule"/>
</dbReference>
<dbReference type="GO" id="GO:0005525">
    <property type="term" value="F:GTP binding"/>
    <property type="evidence" value="ECO:0007669"/>
    <property type="project" value="UniProtKB-UniRule"/>
</dbReference>
<dbReference type="GO" id="GO:0004482">
    <property type="term" value="F:mRNA 5'-cap (guanine-N7-)-methyltransferase activity"/>
    <property type="evidence" value="ECO:0007669"/>
    <property type="project" value="UniProtKB-UniRule"/>
</dbReference>
<dbReference type="GO" id="GO:0004484">
    <property type="term" value="F:mRNA guanylyltransferase activity"/>
    <property type="evidence" value="ECO:0007669"/>
    <property type="project" value="UniProtKB-UniRule"/>
</dbReference>
<dbReference type="GO" id="GO:0003723">
    <property type="term" value="F:RNA binding"/>
    <property type="evidence" value="ECO:0007669"/>
    <property type="project" value="UniProtKB-UniRule"/>
</dbReference>
<dbReference type="GO" id="GO:0016032">
    <property type="term" value="P:viral process"/>
    <property type="evidence" value="ECO:0007669"/>
    <property type="project" value="UniProtKB-UniRule"/>
</dbReference>
<dbReference type="CDD" id="cd20757">
    <property type="entry name" value="capping_2-OMTase_Rotavirus"/>
    <property type="match status" value="1"/>
</dbReference>
<dbReference type="HAMAP" id="MF_04124">
    <property type="entry name" value="Rota_VP3"/>
    <property type="match status" value="1"/>
</dbReference>
<dbReference type="InterPro" id="IPR011181">
    <property type="entry name" value="VP3_Rotav"/>
</dbReference>
<dbReference type="Pfam" id="PF06929">
    <property type="entry name" value="Rotavirus_VP3"/>
    <property type="match status" value="1"/>
</dbReference>
<dbReference type="PIRSF" id="PIRSF004015">
    <property type="entry name" value="LigT_rotavirus"/>
    <property type="match status" value="1"/>
</dbReference>
<dbReference type="PROSITE" id="PS51589">
    <property type="entry name" value="SAM_MT56_VP3"/>
    <property type="match status" value="1"/>
</dbReference>
<proteinExistence type="evidence at transcript level"/>
<accession>Q82041</accession>
<keyword id="KW-0342">GTP-binding</keyword>
<keyword id="KW-0945">Host-virus interaction</keyword>
<keyword id="KW-0489">Methyltransferase</keyword>
<keyword id="KW-0506">mRNA capping</keyword>
<keyword id="KW-0507">mRNA processing</keyword>
<keyword id="KW-0511">Multifunctional enzyme</keyword>
<keyword id="KW-0547">Nucleotide-binding</keyword>
<keyword id="KW-0548">Nucleotidyltransferase</keyword>
<keyword id="KW-1185">Reference proteome</keyword>
<keyword id="KW-0694">RNA-binding</keyword>
<keyword id="KW-0949">S-adenosyl-L-methionine</keyword>
<keyword id="KW-0808">Transferase</keyword>
<keyword id="KW-0899">Viral immunoevasion</keyword>
<keyword id="KW-0946">Virion</keyword>
<comment type="function">
    <text evidence="1">Multifunctional enzyme involved in mRNA capping. Catalyzes the formation of the 5' cap structure on the viral plus-strand transcripts. Specifically binds to GTP and displays guanylyltransferase and methyltransferase activities. Has affinity for ssRNA but not for dsRNA. Capping activity is non-specific and caps RNAs that initiate with either a G or an A residue. Together with VP1 polymerase, forms a VP1-VP3 complex positioned near the channels situated at each of the five-fold vertices of the core. Following infection, the outermost layer of the virus is lost, leaving a double-layered particle (DLP) made up of the core and VP6 shell. VP1 then catalyzes the transcription of fully conservative plus-strand genomic RNAs that are capped by VP3 and extruded through the DLP's channels into the cytoplasm where they function as mRNAs for translation of viral proteins. DLPs probably have an RNA triphosphatase activity as well, whereas open cores do not.</text>
</comment>
<comment type="catalytic activity">
    <reaction evidence="1">
        <text>a 5'-end diphospho-ribonucleoside in mRNA + GTP + H(+) = a 5'-end (5'-triphosphoguanosine)-ribonucleoside in mRNA + diphosphate</text>
        <dbReference type="Rhea" id="RHEA:67012"/>
        <dbReference type="Rhea" id="RHEA-COMP:17165"/>
        <dbReference type="Rhea" id="RHEA-COMP:17166"/>
        <dbReference type="ChEBI" id="CHEBI:15378"/>
        <dbReference type="ChEBI" id="CHEBI:33019"/>
        <dbReference type="ChEBI" id="CHEBI:37565"/>
        <dbReference type="ChEBI" id="CHEBI:167616"/>
        <dbReference type="ChEBI" id="CHEBI:167617"/>
        <dbReference type="EC" id="2.7.7.50"/>
    </reaction>
</comment>
<comment type="catalytic activity">
    <reaction evidence="1">
        <text>a 5'-end (5'-triphosphoguanosine)-ribonucleoside in mRNA + S-adenosyl-L-methionine = a 5'-end (N(7)-methyl 5'-triphosphoguanosine)-ribonucleoside in mRNA + S-adenosyl-L-homocysteine</text>
        <dbReference type="Rhea" id="RHEA:67008"/>
        <dbReference type="Rhea" id="RHEA-COMP:17166"/>
        <dbReference type="Rhea" id="RHEA-COMP:17167"/>
        <dbReference type="ChEBI" id="CHEBI:57856"/>
        <dbReference type="ChEBI" id="CHEBI:59789"/>
        <dbReference type="ChEBI" id="CHEBI:156461"/>
        <dbReference type="ChEBI" id="CHEBI:167617"/>
        <dbReference type="EC" id="2.1.1.56"/>
    </reaction>
</comment>
<comment type="subunit">
    <text evidence="1">Interacts with VP1. Interacts with VP2.</text>
</comment>
<comment type="subcellular location">
    <subcellularLocation>
        <location evidence="1">Virion</location>
    </subcellularLocation>
    <text evidence="1">Attached inside the inner capsid as a minor component. There are about 11 to 12 copies per virion.</text>
</comment>
<comment type="similarity">
    <text evidence="1">Belongs to the rotavirus VP3 family.</text>
</comment>
<protein>
    <recommendedName>
        <fullName evidence="1">Protein VP3</fullName>
    </recommendedName>
    <domain>
        <recommendedName>
            <fullName evidence="1">mRNA guanylyltransferase</fullName>
            <ecNumber evidence="1">2.7.7.50</ecNumber>
        </recommendedName>
    </domain>
    <domain>
        <recommendedName>
            <fullName evidence="1">mRNA (guanine-N(7))-methyltransferase</fullName>
            <ecNumber evidence="1">2.1.1.56</ecNumber>
        </recommendedName>
    </domain>
</protein>
<organismHost>
    <name type="scientific">Homo sapiens</name>
    <name type="common">Human</name>
    <dbReference type="NCBI Taxonomy" id="9606"/>
</organismHost>
<organism>
    <name type="scientific">Rotavirus C (isolate RVC/Human/United Kingdom/Bristol/1989)</name>
    <name type="common">RV-C</name>
    <dbReference type="NCBI Taxonomy" id="31567"/>
    <lineage>
        <taxon>Viruses</taxon>
        <taxon>Riboviria</taxon>
        <taxon>Orthornavirae</taxon>
        <taxon>Duplornaviricota</taxon>
        <taxon>Resentoviricetes</taxon>
        <taxon>Reovirales</taxon>
        <taxon>Sedoreoviridae</taxon>
        <taxon>Rotavirus</taxon>
        <taxon>Rotavirus C</taxon>
    </lineage>
</organism>
<name>VP3_ROTHC</name>
<sequence length="693" mass="81316">MRVLGLFERGNNLNFADTYVYTWNQQYSYHENAFLISNQVATTIILYLDGININEVNKAFELLNSNGIPALIIKPDHIGIFTSSNFTYDWQYKIVYFHEYTYYKNNEFIVSDEFWLYTNINELLPYKILYYERGMRELYAGREYTLYNTATDDDILYKYIYEKDSIMNGTDYKKLYDTNSVKNFVHFMRLLRMRFAVPFDQLSNRITRSRVFSKSRIHIGLRNESIPQALDNIHSQWINYSANGIVISELKGLGSYSEKKISEFGIGQFKNYMNFLTLMFYIKNMKKKPSCTIIGAAPGYWISSMKKYFTIVTYDNKEVDSTEHHNRYFTDDDIVNVKTNGVYIDVRSEFKTNDWRQRRKLIEEETIKWLEISYKLLENKRVEAILLKMTAMDGEIPDGYCVHSPTTYRKSEYYLLIDKHIIKRQKIKVTKSLMYNAINTIYSDNVFISGKYSLRGKTEGVLALYCLSNTINQKEKVIQYANSFSGTCMTVRLNNTYEVDKIIDFKTNSDHTFLPSDFTCSLNTILTSYRGYAGIFGYAITKDLKSNGNNHIYIIPNARDENNFDTFGSHLGLSRYSHSKRFSESATTMSGYIFRDMVSGKENMQDTDKDNYASGHVFNAIAHYRFDYTYDIVGWLRLHKTGQFKVKSDIYKEHTDSEIRNAIESAYVYYLLDGDKVGEKYSKKMMEIWEVQV</sequence>
<evidence type="ECO:0000255" key="1">
    <source>
        <dbReference type="HAMAP-Rule" id="MF_04124"/>
    </source>
</evidence>
<reference key="1">
    <citation type="journal article" date="1996" name="Virus Genes">
        <title>The VP3 gene of human group C rotavirus.</title>
        <authorList>
            <person name="Samarbaf-Zadeh A.R."/>
            <person name="Lambden P.R."/>
            <person name="Green S.M."/>
            <person name="Deng Y."/>
            <person name="Caul E.O."/>
            <person name="Clarke I.N."/>
        </authorList>
    </citation>
    <scope>NUCLEOTIDE SEQUENCE [MRNA]</scope>
</reference>
<feature type="chain" id="PRO_0000369872" description="Protein VP3">
    <location>
        <begin position="1"/>
        <end position="693"/>
    </location>
</feature>
<feature type="region of interest" description="N7-methyltransferase activity" evidence="1">
    <location>
        <begin position="187"/>
        <end position="255"/>
    </location>
</feature>
<feature type="region of interest" description="2'-O-methyltransferase activity" evidence="1">
    <location>
        <begin position="256"/>
        <end position="432"/>
    </location>
</feature>
<feature type="region of interest" description="N7-methyltransferase activity" evidence="1">
    <location>
        <begin position="433"/>
        <end position="559"/>
    </location>
</feature>
<feature type="region of interest" description="GTase/RTPase activity" evidence="1">
    <location>
        <begin position="560"/>
        <end position="693"/>
    </location>
</feature>